<keyword id="KW-0025">Alternative splicing</keyword>
<keyword id="KW-0967">Endosome</keyword>
<keyword id="KW-0342">GTP-binding</keyword>
<keyword id="KW-0458">Lysosome</keyword>
<keyword id="KW-0472">Membrane</keyword>
<keyword id="KW-0547">Nucleotide-binding</keyword>
<keyword id="KW-1185">Reference proteome</keyword>
<keyword id="KW-0812">Transmembrane</keyword>
<keyword id="KW-1133">Transmembrane helix</keyword>
<proteinExistence type="evidence at protein level"/>
<dbReference type="EMBL" id="AY055776">
    <property type="protein sequence ID" value="AAL17698.1"/>
    <property type="molecule type" value="mRNA"/>
</dbReference>
<dbReference type="EMBL" id="AY055777">
    <property type="protein sequence ID" value="AAL17699.2"/>
    <property type="molecule type" value="mRNA"/>
</dbReference>
<dbReference type="EMBL" id="AY550018">
    <property type="protein sequence ID" value="AAS56933.1"/>
    <property type="molecule type" value="mRNA"/>
</dbReference>
<dbReference type="EMBL" id="AY550019">
    <property type="protein sequence ID" value="AAS56934.1"/>
    <property type="molecule type" value="mRNA"/>
</dbReference>
<dbReference type="EMBL" id="AY550020">
    <property type="protein sequence ID" value="AAS56935.1"/>
    <property type="molecule type" value="mRNA"/>
</dbReference>
<dbReference type="EMBL" id="AY550021">
    <property type="protein sequence ID" value="AAS56936.1"/>
    <property type="molecule type" value="mRNA"/>
</dbReference>
<dbReference type="EMBL" id="AY550022">
    <property type="protein sequence ID" value="AAS56937.1"/>
    <property type="molecule type" value="mRNA"/>
</dbReference>
<dbReference type="EMBL" id="AY550023">
    <property type="protein sequence ID" value="AAS56938.1"/>
    <property type="molecule type" value="mRNA"/>
</dbReference>
<dbReference type="EMBL" id="BC092561">
    <property type="protein sequence ID" value="AAH92561.1"/>
    <property type="molecule type" value="mRNA"/>
</dbReference>
<dbReference type="RefSeq" id="NP_001029085.1">
    <molecule id="Q8K3L6-1"/>
    <property type="nucleotide sequence ID" value="NM_001033913.1"/>
</dbReference>
<dbReference type="RefSeq" id="NP_663713.1">
    <molecule id="Q8K3L6-2"/>
    <property type="nucleotide sequence ID" value="NM_145680.3"/>
</dbReference>
<dbReference type="RefSeq" id="XP_006236519.1">
    <property type="nucleotide sequence ID" value="XM_006236457.3"/>
</dbReference>
<dbReference type="RefSeq" id="XP_006236520.1">
    <molecule id="Q8K3L6-2"/>
    <property type="nucleotide sequence ID" value="XM_006236458.5"/>
</dbReference>
<dbReference type="RefSeq" id="XP_008761093.1">
    <property type="nucleotide sequence ID" value="XM_008762871.2"/>
</dbReference>
<dbReference type="SMR" id="Q8K3L6"/>
<dbReference type="FunCoup" id="Q8K3L6">
    <property type="interactions" value="34"/>
</dbReference>
<dbReference type="STRING" id="10116.ENSRNOP00000055929"/>
<dbReference type="PhosphoSitePlus" id="Q8K3L6"/>
<dbReference type="SwissPalm" id="Q8K3L6"/>
<dbReference type="PaxDb" id="10116-ENSRNOP00000055929"/>
<dbReference type="Ensembl" id="ENSRNOT00000059156.3">
    <molecule id="Q8K3L6-2"/>
    <property type="protein sequence ID" value="ENSRNOP00000055929.3"/>
    <property type="gene ID" value="ENSRNOG00000008416.8"/>
</dbReference>
<dbReference type="Ensembl" id="ENSRNOT00000084927.2">
    <molecule id="Q8K3L6-1"/>
    <property type="protein sequence ID" value="ENSRNOP00000072663.2"/>
    <property type="gene ID" value="ENSRNOG00000008416.8"/>
</dbReference>
<dbReference type="Ensembl" id="ENSRNOT00000115571.1">
    <molecule id="Q8K3L6-1"/>
    <property type="protein sequence ID" value="ENSRNOP00000078457.1"/>
    <property type="gene ID" value="ENSRNOG00000008416.8"/>
</dbReference>
<dbReference type="GeneID" id="246774"/>
<dbReference type="KEGG" id="rno:246774"/>
<dbReference type="UCSC" id="RGD:628871">
    <molecule id="Q8K3L6-1"/>
    <property type="organism name" value="rat"/>
</dbReference>
<dbReference type="AGR" id="RGD:628871"/>
<dbReference type="CTD" id="55340"/>
<dbReference type="RGD" id="628871">
    <property type="gene designation" value="Gimap5"/>
</dbReference>
<dbReference type="eggNOG" id="ENOG502RB0C">
    <property type="taxonomic scope" value="Eukaryota"/>
</dbReference>
<dbReference type="GeneTree" id="ENSGT00940000154844"/>
<dbReference type="InParanoid" id="Q8K3L6"/>
<dbReference type="OMA" id="RTCQAET"/>
<dbReference type="OrthoDB" id="8954335at2759"/>
<dbReference type="PhylomeDB" id="Q8K3L6"/>
<dbReference type="TreeFam" id="TF330845"/>
<dbReference type="PRO" id="PR:Q8K3L6"/>
<dbReference type="Proteomes" id="UP000002494">
    <property type="component" value="Chromosome 4"/>
</dbReference>
<dbReference type="Bgee" id="ENSRNOG00000008416">
    <property type="expression patterns" value="Expressed in thymus and 17 other cell types or tissues"/>
</dbReference>
<dbReference type="ExpressionAtlas" id="Q8K3L6">
    <property type="expression patterns" value="baseline and differential"/>
</dbReference>
<dbReference type="GO" id="GO:0005765">
    <property type="term" value="C:lysosomal membrane"/>
    <property type="evidence" value="ECO:0007669"/>
    <property type="project" value="UniProtKB-SubCell"/>
</dbReference>
<dbReference type="GO" id="GO:0005739">
    <property type="term" value="C:mitochondrion"/>
    <property type="evidence" value="ECO:0007669"/>
    <property type="project" value="GOC"/>
</dbReference>
<dbReference type="GO" id="GO:0032585">
    <property type="term" value="C:multivesicular body membrane"/>
    <property type="evidence" value="ECO:0007669"/>
    <property type="project" value="UniProtKB-SubCell"/>
</dbReference>
<dbReference type="GO" id="GO:0005525">
    <property type="term" value="F:GTP binding"/>
    <property type="evidence" value="ECO:0007669"/>
    <property type="project" value="UniProtKB-KW"/>
</dbReference>
<dbReference type="GO" id="GO:0043011">
    <property type="term" value="P:myeloid dendritic cell differentiation"/>
    <property type="evidence" value="ECO:0000315"/>
    <property type="project" value="RGD"/>
</dbReference>
<dbReference type="GO" id="GO:0043066">
    <property type="term" value="P:negative regulation of apoptotic process"/>
    <property type="evidence" value="ECO:0000315"/>
    <property type="project" value="RGD"/>
</dbReference>
<dbReference type="GO" id="GO:0050995">
    <property type="term" value="P:negative regulation of lipid catabolic process"/>
    <property type="evidence" value="ECO:0000315"/>
    <property type="project" value="RGD"/>
</dbReference>
<dbReference type="GO" id="GO:0045019">
    <property type="term" value="P:negative regulation of nitric oxide biosynthetic process"/>
    <property type="evidence" value="ECO:0000315"/>
    <property type="project" value="RGD"/>
</dbReference>
<dbReference type="GO" id="GO:0050868">
    <property type="term" value="P:negative regulation of T cell activation"/>
    <property type="evidence" value="ECO:0000315"/>
    <property type="project" value="RGD"/>
</dbReference>
<dbReference type="GO" id="GO:0032689">
    <property type="term" value="P:negative regulation of type II interferon production"/>
    <property type="evidence" value="ECO:0000315"/>
    <property type="project" value="RGD"/>
</dbReference>
<dbReference type="GO" id="GO:0010524">
    <property type="term" value="P:positive regulation of calcium ion transport into cytosol"/>
    <property type="evidence" value="ECO:0000315"/>
    <property type="project" value="RGD"/>
</dbReference>
<dbReference type="GO" id="GO:0032831">
    <property type="term" value="P:positive regulation of CD4-positive, CD25-positive, alpha-beta regulatory T cell differentiation"/>
    <property type="evidence" value="ECO:0000315"/>
    <property type="project" value="RGD"/>
</dbReference>
<dbReference type="GO" id="GO:0045588">
    <property type="term" value="P:positive regulation of gamma-delta T cell differentiation"/>
    <property type="evidence" value="ECO:0000315"/>
    <property type="project" value="RGD"/>
</dbReference>
<dbReference type="GO" id="GO:0002925">
    <property type="term" value="P:positive regulation of humoral immune response mediated by circulating immunoglobulin"/>
    <property type="evidence" value="ECO:0000315"/>
    <property type="project" value="RGD"/>
</dbReference>
<dbReference type="GO" id="GO:0045838">
    <property type="term" value="P:positive regulation of membrane potential"/>
    <property type="evidence" value="ECO:0000315"/>
    <property type="project" value="RGD"/>
</dbReference>
<dbReference type="GO" id="GO:0002729">
    <property type="term" value="P:positive regulation of natural killer cell cytokine production"/>
    <property type="evidence" value="ECO:0000315"/>
    <property type="project" value="RGD"/>
</dbReference>
<dbReference type="GO" id="GO:0045954">
    <property type="term" value="P:positive regulation of natural killer cell mediated cytotoxicity"/>
    <property type="evidence" value="ECO:0000315"/>
    <property type="project" value="RGD"/>
</dbReference>
<dbReference type="GO" id="GO:0046902">
    <property type="term" value="P:regulation of mitochondrial membrane permeability"/>
    <property type="evidence" value="ECO:0000315"/>
    <property type="project" value="RGD"/>
</dbReference>
<dbReference type="GO" id="GO:0030217">
    <property type="term" value="P:T cell differentiation"/>
    <property type="evidence" value="ECO:0000270"/>
    <property type="project" value="RGD"/>
</dbReference>
<dbReference type="GO" id="GO:0043029">
    <property type="term" value="P:T cell homeostasis"/>
    <property type="evidence" value="ECO:0000315"/>
    <property type="project" value="RGD"/>
</dbReference>
<dbReference type="GO" id="GO:0001659">
    <property type="term" value="P:temperature homeostasis"/>
    <property type="evidence" value="ECO:0000315"/>
    <property type="project" value="RGD"/>
</dbReference>
<dbReference type="CDD" id="cd01852">
    <property type="entry name" value="AIG1"/>
    <property type="match status" value="1"/>
</dbReference>
<dbReference type="FunFam" id="3.40.50.300:FF:000366">
    <property type="entry name" value="GTPase, IMAP family member 2"/>
    <property type="match status" value="1"/>
</dbReference>
<dbReference type="Gene3D" id="3.40.50.300">
    <property type="entry name" value="P-loop containing nucleotide triphosphate hydrolases"/>
    <property type="match status" value="1"/>
</dbReference>
<dbReference type="InterPro" id="IPR006703">
    <property type="entry name" value="G_AIG1"/>
</dbReference>
<dbReference type="InterPro" id="IPR045058">
    <property type="entry name" value="GIMA/IAN/Toc"/>
</dbReference>
<dbReference type="InterPro" id="IPR027417">
    <property type="entry name" value="P-loop_NTPase"/>
</dbReference>
<dbReference type="PANTHER" id="PTHR10903:SF69">
    <property type="entry name" value="GTPASE IMAP FAMILY MEMBER 5"/>
    <property type="match status" value="1"/>
</dbReference>
<dbReference type="PANTHER" id="PTHR10903">
    <property type="entry name" value="GTPASE, IMAP FAMILY MEMBER-RELATED"/>
    <property type="match status" value="1"/>
</dbReference>
<dbReference type="Pfam" id="PF04548">
    <property type="entry name" value="AIG1"/>
    <property type="match status" value="1"/>
</dbReference>
<dbReference type="SUPFAM" id="SSF52540">
    <property type="entry name" value="P-loop containing nucleoside triphosphate hydrolases"/>
    <property type="match status" value="1"/>
</dbReference>
<dbReference type="PROSITE" id="PS51720">
    <property type="entry name" value="G_AIG1"/>
    <property type="match status" value="1"/>
</dbReference>
<organism>
    <name type="scientific">Rattus norvegicus</name>
    <name type="common">Rat</name>
    <dbReference type="NCBI Taxonomy" id="10116"/>
    <lineage>
        <taxon>Eukaryota</taxon>
        <taxon>Metazoa</taxon>
        <taxon>Chordata</taxon>
        <taxon>Craniata</taxon>
        <taxon>Vertebrata</taxon>
        <taxon>Euteleostomi</taxon>
        <taxon>Mammalia</taxon>
        <taxon>Eutheria</taxon>
        <taxon>Euarchontoglires</taxon>
        <taxon>Glires</taxon>
        <taxon>Rodentia</taxon>
        <taxon>Myomorpha</taxon>
        <taxon>Muroidea</taxon>
        <taxon>Muridae</taxon>
        <taxon>Murinae</taxon>
        <taxon>Rattus</taxon>
    </lineage>
</organism>
<name>GIMA5_RAT</name>
<protein>
    <recommendedName>
        <fullName>GTPase IMAP family member 5</fullName>
    </recommendedName>
    <alternativeName>
        <fullName>Immunity-associated nucleotide 4 protein</fullName>
        <shortName>IAN-4</shortName>
    </alternativeName>
    <alternativeName>
        <fullName>Immunity-associated nucleotide 4-like 1 protein</fullName>
    </alternativeName>
</protein>
<sequence>MEDHGFEELSTRTHDLNVRRLTKGNINFLLSTGQETYSVEDSGLLRILLVGKSGCGKSATGNSILRRPAFESRLRGQSVTRTSQAEMGTWEGRSFLVVDTPPIFESKIQNQDMDKDIGNCYLMCAPGPHVLLLVTQLGRYTVEDAMAVRMVKQIFGVGVMRYMIVLFTHKEDLADESLEEFVTHTGNLDLHRLVQECGRRYCAFNNKASGEEQQGQLAELMALVRRLEQEHEGSFHSNDLFVYTQVFLRGGYSEHQEPYKFYLTKVRQEVEKQKRELEEQEGSWMAKMLCRVTSCLDWHIAVSVLLIVLGLTLLITLINMYIGRWK</sequence>
<feature type="chain" id="PRO_0000190992" description="GTPase IMAP family member 5">
    <location>
        <begin position="1"/>
        <end position="326"/>
    </location>
</feature>
<feature type="topological domain" description="Cytoplasmic" evidence="17">
    <location>
        <begin position="1"/>
        <end position="297"/>
    </location>
</feature>
<feature type="transmembrane region" description="Helical; Anchor for type IV membrane protein" evidence="17">
    <location>
        <begin position="298"/>
        <end position="318"/>
    </location>
</feature>
<feature type="topological domain" description="Lumenal" evidence="17">
    <location>
        <begin position="319"/>
        <end position="326"/>
    </location>
</feature>
<feature type="domain" description="AIG1-type G" evidence="5">
    <location>
        <begin position="42"/>
        <end position="245"/>
    </location>
</feature>
<feature type="binding site" evidence="2">
    <location>
        <begin position="51"/>
        <end position="59"/>
    </location>
    <ligand>
        <name>GTP</name>
        <dbReference type="ChEBI" id="CHEBI:37565"/>
    </ligand>
</feature>
<feature type="binding site" evidence="4">
    <location>
        <position position="72"/>
    </location>
    <ligand>
        <name>GTP</name>
        <dbReference type="ChEBI" id="CHEBI:37565"/>
    </ligand>
</feature>
<feature type="binding site" evidence="2">
    <location>
        <begin position="169"/>
        <end position="171"/>
    </location>
    <ligand>
        <name>GTP</name>
        <dbReference type="ChEBI" id="CHEBI:37565"/>
    </ligand>
</feature>
<feature type="binding site" evidence="2">
    <location>
        <position position="206"/>
    </location>
    <ligand>
        <name>GTP</name>
        <dbReference type="ChEBI" id="CHEBI:37565"/>
    </ligand>
</feature>
<feature type="splice variant" id="VSP_008962" description="In isoform 2." evidence="11 14">
    <original>MEDHGFEELSTRTHDLNVRRLTKGNINFLLST</original>
    <variation>MEGLQKSTYGTIVE</variation>
    <location>
        <begin position="1"/>
        <end position="32"/>
    </location>
</feature>
<feature type="sequence variant" evidence="6">
    <original>A</original>
    <variation>V</variation>
    <location>
        <position position="174"/>
    </location>
</feature>
<feature type="sequence variant" evidence="6">
    <original>M</original>
    <variation>I</variation>
    <location>
        <position position="221"/>
    </location>
</feature>
<comment type="function">
    <text evidence="7 8">Required for mitochondrial integrity and T-cell survival. May contribute to T-cell quiescence.</text>
</comment>
<comment type="function">
    <text evidence="1 3 8 10">Plays a role in T lymphocyte development and the optimal generation of CD4/CD8 double-positive thymocytes (By similarity). Inhibitor of GSK3A, possibly by sequestering GSK3A in cytoplasmic vesicles and impairing its translocation to the nucleus. Consequently, impairs GSK3A-dependent transcriptional program and regulation of the DNA damage response occurring during T cells proliferation (By similarity). Required for the survival of peripheral T cells, natural killer (NK) and NK T-cell development and the maintenance of normal liver function (By similarity). Promotes the survival of quiescent T-cells (PubMed:15307172). May regulate Ca(2+) homeostasis by modulating lysosomal Ca(2+) stores, preventing its accumulation in the absence of T cell activation (PubMed:28223986). May play a role in mitochondrial DNA segregation in hematopoietic tissues (By similarity). Is a regulator of liver endothelial cell homeostasis (By similarity).</text>
</comment>
<comment type="subunit">
    <text evidence="1 17">Interacts with BAD, BAK1, BAX, BCL2, BCL2L1/Bcl-xL and BCL2L11/BimEL (By similarity). The interaction with BAX is increased, when cells initiate apoptosis upon IL2 withdrawal (By similarity). Forms a complex with BCL2L1 or MCL1 and HSPA8/HSC70; the interaction between HSPA8 and BCL2L1 or MCL1 is impaired in the absence of GIMAP5 (By similarity). May interact (via N-terminus) with microtubules (Probable).</text>
</comment>
<comment type="subcellular location">
    <subcellularLocation>
        <location evidence="10">Lysosome membrane</location>
        <topology evidence="10">Single-pass type IV membrane protein</topology>
    </subcellularLocation>
    <subcellularLocation>
        <location evidence="9">Endosome</location>
        <location evidence="9">Multivesicular body membrane</location>
        <topology evidence="16">Single-pass type IV membrane protein</topology>
    </subcellularLocation>
    <subcellularLocation>
        <location evidence="10">Endosome membrane</location>
        <topology evidence="10">Single-pass type IV membrane protein</topology>
    </subcellularLocation>
</comment>
<comment type="alternative products">
    <event type="alternative splicing"/>
    <isoform>
        <id>Q8K3L6-1</id>
        <name>1</name>
        <name>Long</name>
        <name>IAN4L1L</name>
        <name evidence="15">Gimap5v1</name>
        <sequence type="displayed"/>
    </isoform>
    <isoform>
        <id>Q8K3L6-2</id>
        <name>2</name>
        <name>Short</name>
        <name>IAN4L1S</name>
        <name evidence="15">Gimap5v2</name>
        <sequence type="described" ref="VSP_008962"/>
    </isoform>
</comment>
<comment type="tissue specificity">
    <text evidence="6 7 9 10">Primarily expressed in spleen, heart, lung and intestine and, at lower levels, in kidney, stomach and muscle (PubMed:12031988). Expressed in thymus and lymph nodes (at protein level) (PubMed:12031988, PubMed:12930893, PubMed:21487483). In the spleen, expressed in periarteriolar lymphatic sheets (PubMed:12031988). Isoform 2: Expressed at higher levels in T lymphocytes compared to isoform 1 (PubMed:28223986).</text>
</comment>
<comment type="developmental stage">
    <text evidence="10">Down-regulated during T lymphocyte activation.</text>
</comment>
<comment type="disease">
    <text evidence="6">Diabetes-prone biobreeding (DP-BB) rats have a frameshift mutation in Gimap5, which results in a truncated protein in which the C-terminal 215 amino acids, including the membrane anchor, are replaced by 19 other amino acids. These animals exhibit life-long T-cell lymphopenia, including lack of regulatory T cells, and spontaneously develop insulin-dependent diabetes resembling human type 1 diabetes.</text>
</comment>
<comment type="similarity">
    <text evidence="16">Belongs to the TRAFAC class TrmE-Era-EngA-EngB-Septin-like GTPase superfamily. AIG1/Toc34/Toc159-like paraseptin GTPase family. IAN subfamily.</text>
</comment>
<accession>Q8K3L6</accession>
<accession>Q5YEJ2</accession>
<accession>Q5YEJ3</accession>
<accession>Q8K3L7</accession>
<reference key="1">
    <citation type="journal article" date="2002" name="Diabetes">
        <title>The diabetes-prone BB rat carries a frameshift mutation in Ian4, a positional candidate of Iddm1.</title>
        <authorList>
            <person name="Hornum L."/>
            <person name="Romer J."/>
            <person name="Markholst H."/>
        </authorList>
    </citation>
    <scope>NUCLEOTIDE SEQUENCE [MRNA] (ISOFORMS 1 AND 2)</scope>
    <scope>VARIANTS VAL-174 AND ILE-221</scope>
    <scope>TISSUE SPECIFICITY</scope>
    <scope>INVOLVEMENT IN INSULIN-DEPENDENT DIABETES AND T-CELL LYMPHOPENIA</scope>
    <source>
        <strain>BB</strain>
        <tissue>Thymus</tissue>
    </source>
</reference>
<reference key="2">
    <citation type="journal article" date="2004" name="Gene">
        <title>The antiapoptotic gene Ian4l1 in the rat: genomic organization and promoter characterization.</title>
        <authorList>
            <person name="Andersen U.N."/>
            <person name="Markholst H."/>
            <person name="Hornum L."/>
        </authorList>
    </citation>
    <scope>NUCLEOTIDE SEQUENCE [MRNA] (ISOFORMS 1 AND 2)</scope>
    <source>
        <strain>BB</strain>
        <tissue>Thymus</tissue>
    </source>
</reference>
<reference key="3">
    <citation type="journal article" date="2004" name="Genome Res.">
        <title>The status, quality, and expansion of the NIH full-length cDNA project: the Mammalian Gene Collection (MGC).</title>
        <authorList>
            <consortium name="The MGC Project Team"/>
        </authorList>
    </citation>
    <scope>NUCLEOTIDE SEQUENCE [LARGE SCALE MRNA] (ISOFORM 1)</scope>
    <source>
        <tissue>Kidney</tissue>
    </source>
</reference>
<reference key="4">
    <citation type="journal article" date="2003" name="Proc. Natl. Acad. Sci. U.S.A.">
        <title>Ian4 is required for mitochondrial integrity and T cell survival.</title>
        <authorList>
            <person name="Pandarpurkar M."/>
            <person name="Wilson-Fritch L."/>
            <person name="Corvera S."/>
            <person name="Markholst H."/>
            <person name="Hornum L."/>
            <person name="Greiner D.L."/>
            <person name="Mordes J.P."/>
            <person name="Rossini A.A."/>
            <person name="Bortell R."/>
        </authorList>
    </citation>
    <scope>TISSUE SPECIFICITY</scope>
</reference>
<reference key="5">
    <citation type="journal article" date="2004" name="Eur. J. Immunol.">
        <title>Partial activation precedes apoptotic death in T cells harboring an IAN gene mutation.</title>
        <authorList>
            <person name="Lang J.A."/>
            <person name="Kominski D."/>
            <person name="Bellgrau D."/>
            <person name="Scheinman R.I."/>
        </authorList>
    </citation>
    <scope>FUNCTION</scope>
</reference>
<reference key="6">
    <citation type="journal article" date="2010" name="Self/Nonself">
        <title>The autoimmunity-related GIMAP5 GTPase is a lysosome-associated protein.</title>
        <authorList>
            <person name="Wong V.W."/>
            <person name="Saunders A.E."/>
            <person name="Hutchings A."/>
            <person name="Pascall J.C."/>
            <person name="Carter C."/>
            <person name="Bright N.A."/>
            <person name="Walker S.A."/>
            <person name="Ktistakis N.T."/>
            <person name="Butcher G.W."/>
        </authorList>
    </citation>
    <scope>TISSUE SPECIFICITY</scope>
</reference>
<reference key="7">
    <citation type="journal article" date="2017" name="Front. Immunol.">
        <title>GTPase of the immune-associated nucleotide protein 5 regulates the lysosomal calcium compartment in T lymphocytes.</title>
        <authorList>
            <person name="Serrano D."/>
            <person name="Ghobadi F."/>
            <person name="Boulay G."/>
            <person name="Ilangumaran S."/>
            <person name="Lavoie C."/>
            <person name="Ramanathan S."/>
        </authorList>
    </citation>
    <scope>FUNCTION</scope>
    <scope>INTERACTION WITH MICROTUBULES</scope>
    <scope>SUBCELLULAR LOCATION</scope>
    <scope>TOPOLOGY</scope>
    <scope>TISSUE SPECIFICITY</scope>
    <scope>DEVELOPMENTAL STAGE</scope>
</reference>
<evidence type="ECO:0000250" key="1">
    <source>
        <dbReference type="UniProtKB" id="Q8BWF2"/>
    </source>
</evidence>
<evidence type="ECO:0000250" key="2">
    <source>
        <dbReference type="UniProtKB" id="Q8WWP7"/>
    </source>
</evidence>
<evidence type="ECO:0000250" key="3">
    <source>
        <dbReference type="UniProtKB" id="Q96F15"/>
    </source>
</evidence>
<evidence type="ECO:0000250" key="4">
    <source>
        <dbReference type="UniProtKB" id="Q9UG22"/>
    </source>
</evidence>
<evidence type="ECO:0000255" key="5">
    <source>
        <dbReference type="PROSITE-ProRule" id="PRU01057"/>
    </source>
</evidence>
<evidence type="ECO:0000269" key="6">
    <source>
    </source>
</evidence>
<evidence type="ECO:0000269" key="7">
    <source>
    </source>
</evidence>
<evidence type="ECO:0000269" key="8">
    <source>
    </source>
</evidence>
<evidence type="ECO:0000269" key="9">
    <source>
    </source>
</evidence>
<evidence type="ECO:0000269" key="10">
    <source>
    </source>
</evidence>
<evidence type="ECO:0000303" key="11">
    <source>
    </source>
</evidence>
<evidence type="ECO:0000303" key="12">
    <source>
    </source>
</evidence>
<evidence type="ECO:0000303" key="13">
    <source>
    </source>
</evidence>
<evidence type="ECO:0000303" key="14">
    <source>
    </source>
</evidence>
<evidence type="ECO:0000303" key="15">
    <source>
    </source>
</evidence>
<evidence type="ECO:0000305" key="16"/>
<evidence type="ECO:0000305" key="17">
    <source>
    </source>
</evidence>
<gene>
    <name type="primary">Gimap5</name>
    <name evidence="11 12 13" type="synonym">Ian4</name>
    <name evidence="14" type="synonym">Ian4l1</name>
    <name type="synonym">Iddm1</name>
    <name type="synonym">Lyp</name>
</gene>